<comment type="function">
    <text evidence="3">Important regulator of cell cycle progression. Inhibits the kinase activity of CDK2 bound to cyclin A, but has little inhibitory activity on CDK2 bound to SPDYA. Involved in G1 arrest. Potent inhibitor of cyclin E- and cyclin A-CDK2 complexes. Forms a complex with cyclin type D-CDK4 complexes and is involved in the assembly, stability, and modulation of CCND1-CDK4 complex activation. Acts either as an inhibitor or an activator of cyclin type D-CDK4 complexes depending on its phosphorylation state and/or stoichometry.</text>
</comment>
<comment type="subunit">
    <text evidence="1 3">Forms a ternary complex composed of CCNE1, CDK2 and CDKN1B. Interacts directly with CCNE1; the interaction is inhibited by CDK2-dependent phosphorylation on Thr-187. Interacts with COPS5, subunit of the COP9 signalosome complex; the interaction leads to CDKN1B degradation. Interacts with NUP50; the interaction leads to nuclear import and degradation of phosphorylated CDKN1B. Interacts with CCND1 and SNX6 (By similarity). Interacts (Thr-198-phosphorylated form) with 14-3-3 proteins, binds strongly YWHAQ, weakly YWHAE and YWHAH, but not YWHAB nor YWHAZ; the interaction with YWHAQ results in translocation to the cytoplasm. Interacts with AKT1 and LYN; the interactions lead to cytoplasmic mislocation, phosphorylation of CDKN1B and inhibition of cell cycle arrest. Forms a ternary complex with CCNA2 and CDK2; CDKN1B inhibits the kinase activity of CDK2 through conformational rearrangements. Interacts (unphosphorylated form) with CDK2. Forms a complex with CDK2 and SPDYA, but does not directly interact with SPDYA. Forms a ternary complex composed of cyclin D, CDK4 and CDKN1B. Interacts (phosphorylated on Tyr-88 and Tyr-89) with CDK4; the interaction is required for cyclin D and CDK4 complex assembly, induces nuclear translocation and activates the CDK4 kinase activity. Interacts with GRB2. Interacts with PIM1. Identified in a complex with SKP1, SKP2 and CKS1B. Interacts with UHMK1; the interaction leads to cytoplasmic mislocation, phosphorylation of CDKN1B and inhibition of cell cycle arrest. Also interacts with CDK1. Dephosphorylated on Thr-187 by PPM1H, leading to CDKN1B stability (By similarity).</text>
</comment>
<comment type="subcellular location">
    <subcellularLocation>
        <location evidence="1">Nucleus</location>
    </subcellularLocation>
    <subcellularLocation>
        <location evidence="1">Cytoplasm</location>
    </subcellularLocation>
    <subcellularLocation>
        <location evidence="1">Endosome</location>
    </subcellularLocation>
    <text evidence="1">Nuclear and cytoplasmic in quiescent cells. AKT- or RSK-mediated phosphorylation on Thr-198, binds 14-3-3, translocates to the cytoplasm and promotes cell cycle progression. Mitogen-activated UHMK1 phosphorylation on Ser-10 also results in translocation to the cytoplasm and cell cycle progression. Phosphorylation on Ser-10 facilitates nuclear export. Translocates to the nucleus on phosphorylation of Tyr-88 and Tyr-89 (By similarity). Colocalizes at the endosome with SNX6; this leads to lysosomal degradation (By similarity).</text>
</comment>
<comment type="domain">
    <text evidence="1">A peptide sequence containing only AA 28-79 retains substantial Kip1 cyclin A/CDK2 inhibitory activity.</text>
</comment>
<comment type="PTM">
    <text evidence="3">Phosphorylated; phosphorylation occurs on serine, threonine and tyrosine residues. Phosphorylation on Ser-10 is the major site of phosphorylation in resting cells, takes place at the G(0)-G(1) phase and leads to protein stability. Phosphorylation on other sites is greatly enhanced by mitogens, growth factors, cMYC and in certain cancer cell lines. The phosphorylated form found in the cytoplasm is inactivate. Phosphorylation on Thr-198 is required for interaction with 14-3-3 proteins. Phosphorylation on Thr-187, by CDK1 and CDK2 leads to protein ubiquitination and proteasomal degradation. Tyrosine phosphorylation promotes this process. Phosphorylation by PKB/AKT1 can be suppressed by LY294002, an inhibitor of the catalytic subunit of PI3K. Phosphorylation on Tyr-88 and Tyr-89 has no effect on binding CDK2, but is required for binding CDK4. Dephosphorylated on tyrosine residues by G-CSF (By similarity). Dephosphorylated on Thr-187 by PPM1H, leading to CDKN1B stability (By similarity).</text>
</comment>
<comment type="PTM">
    <text evidence="1">Ubiquitinated; in the cytoplasm by the KPC complex (composed of RNF123/KPC1 and UBAC1/KPC2) and, in the nucleus, by SCF(SKP2). The latter requires prior phosphorylation on Thr-187. Ubiquitinated; by a TRIM21-containing SCF(SKP2)-like complex; leads to its degradation (By similarity).</text>
</comment>
<comment type="PTM">
    <text evidence="1">Subject to degradation in the lysosome. Interaction with SNX6 promotes lysosomal degradation (By similarity).</text>
</comment>
<comment type="similarity">
    <text evidence="6">Belongs to the CDI family.</text>
</comment>
<dbReference type="EMBL" id="U49649">
    <property type="protein sequence ID" value="AAA92570.1"/>
    <property type="molecule type" value="mRNA"/>
</dbReference>
<dbReference type="RefSeq" id="NP_001233754.1">
    <property type="nucleotide sequence ID" value="NM_001246825.2"/>
</dbReference>
<dbReference type="PaxDb" id="10029-NP_001233754.1"/>
<dbReference type="GeneID" id="100689401"/>
<dbReference type="KEGG" id="cge:100689401"/>
<dbReference type="CTD" id="1027"/>
<dbReference type="eggNOG" id="KOG4743">
    <property type="taxonomic scope" value="Eukaryota"/>
</dbReference>
<dbReference type="OrthoDB" id="6373236at2759"/>
<dbReference type="Proteomes" id="UP000694386">
    <property type="component" value="Unplaced"/>
</dbReference>
<dbReference type="Proteomes" id="UP001108280">
    <property type="component" value="Chromosome 8"/>
</dbReference>
<dbReference type="GO" id="GO:0005768">
    <property type="term" value="C:endosome"/>
    <property type="evidence" value="ECO:0007669"/>
    <property type="project" value="UniProtKB-SubCell"/>
</dbReference>
<dbReference type="GO" id="GO:0005634">
    <property type="term" value="C:nucleus"/>
    <property type="evidence" value="ECO:0007669"/>
    <property type="project" value="UniProtKB-SubCell"/>
</dbReference>
<dbReference type="GO" id="GO:0004861">
    <property type="term" value="F:cyclin-dependent protein serine/threonine kinase inhibitor activity"/>
    <property type="evidence" value="ECO:0000250"/>
    <property type="project" value="UniProtKB"/>
</dbReference>
<dbReference type="GO" id="GO:0051087">
    <property type="term" value="F:protein-folding chaperone binding"/>
    <property type="evidence" value="ECO:0007669"/>
    <property type="project" value="TreeGrafter"/>
</dbReference>
<dbReference type="GO" id="GO:0000082">
    <property type="term" value="P:G1/S transition of mitotic cell cycle"/>
    <property type="evidence" value="ECO:0007669"/>
    <property type="project" value="TreeGrafter"/>
</dbReference>
<dbReference type="GO" id="GO:0008285">
    <property type="term" value="P:negative regulation of cell population proliferation"/>
    <property type="evidence" value="ECO:0007669"/>
    <property type="project" value="TreeGrafter"/>
</dbReference>
<dbReference type="GO" id="GO:0045736">
    <property type="term" value="P:negative regulation of cyclin-dependent protein serine/threonine kinase activity"/>
    <property type="evidence" value="ECO:0000250"/>
    <property type="project" value="UniProtKB"/>
</dbReference>
<dbReference type="GO" id="GO:0045930">
    <property type="term" value="P:negative regulation of mitotic cell cycle"/>
    <property type="evidence" value="ECO:0007669"/>
    <property type="project" value="TreeGrafter"/>
</dbReference>
<dbReference type="FunFam" id="4.10.365.10:FF:000001">
    <property type="entry name" value="Cyclin-dependent kinase inhibitor 1B"/>
    <property type="match status" value="1"/>
</dbReference>
<dbReference type="Gene3D" id="4.10.365.10">
    <property type="entry name" value="p27"/>
    <property type="match status" value="1"/>
</dbReference>
<dbReference type="InterPro" id="IPR003175">
    <property type="entry name" value="CDI_dom"/>
</dbReference>
<dbReference type="InterPro" id="IPR044898">
    <property type="entry name" value="CDI_dom_sf"/>
</dbReference>
<dbReference type="PANTHER" id="PTHR10265">
    <property type="entry name" value="CYCLIN-DEPENDENT KINASE INHIBITOR 1"/>
    <property type="match status" value="1"/>
</dbReference>
<dbReference type="PANTHER" id="PTHR10265:SF9">
    <property type="entry name" value="CYCLIN-DEPENDENT KINASE INHIBITOR 1B"/>
    <property type="match status" value="1"/>
</dbReference>
<dbReference type="Pfam" id="PF02234">
    <property type="entry name" value="CDI"/>
    <property type="match status" value="1"/>
</dbReference>
<sequence>MSNVRVSNGSPSLERMDARQAEHPKPSACRNLFGPVNHEELTRDLEKHCRDMEEASQRKWNFDFQNHNPLEGRYQWQEVDKGSLPEFYYRPPRPPKGACKVPAQESQDVSGSRQAVPSIGSQAYSEDRHLVEQMPDPTDSPAGLAEQCPGMRKRPAADDSSSQNKRANRTEENVSDGSLNAGSVEQTPKKPGLRRHQT</sequence>
<reference key="1">
    <citation type="journal article" date="1997" name="Somat. Cell Mol. Genet.">
        <title>Isolation of a hamster cDNA homologous to the mouse and human cyclin kinase inhibitory protein p27Kip1.</title>
        <authorList>
            <person name="Parekh H.P."/>
            <person name="Pillarisetti K."/>
            <person name="Kunapuli S."/>
            <person name="Simpkins H."/>
        </authorList>
    </citation>
    <scope>NUCLEOTIDE SEQUENCE [MRNA]</scope>
    <source>
        <tissue>Lung</tissue>
    </source>
</reference>
<accession>Q60439</accession>
<organism>
    <name type="scientific">Cricetulus griseus</name>
    <name type="common">Chinese hamster</name>
    <name type="synonym">Cricetulus barabensis griseus</name>
    <dbReference type="NCBI Taxonomy" id="10029"/>
    <lineage>
        <taxon>Eukaryota</taxon>
        <taxon>Metazoa</taxon>
        <taxon>Chordata</taxon>
        <taxon>Craniata</taxon>
        <taxon>Vertebrata</taxon>
        <taxon>Euteleostomi</taxon>
        <taxon>Mammalia</taxon>
        <taxon>Eutheria</taxon>
        <taxon>Euarchontoglires</taxon>
        <taxon>Glires</taxon>
        <taxon>Rodentia</taxon>
        <taxon>Myomorpha</taxon>
        <taxon>Muroidea</taxon>
        <taxon>Cricetidae</taxon>
        <taxon>Cricetinae</taxon>
        <taxon>Cricetulus</taxon>
    </lineage>
</organism>
<name>CDN1B_CRIGR</name>
<proteinExistence type="evidence at transcript level"/>
<gene>
    <name type="primary">CDKN1B</name>
    <name type="synonym">KIP1</name>
</gene>
<evidence type="ECO:0000250" key="1"/>
<evidence type="ECO:0000250" key="2">
    <source>
        <dbReference type="UniProtKB" id="P46414"/>
    </source>
</evidence>
<evidence type="ECO:0000250" key="3">
    <source>
        <dbReference type="UniProtKB" id="P46527"/>
    </source>
</evidence>
<evidence type="ECO:0000255" key="4"/>
<evidence type="ECO:0000256" key="5">
    <source>
        <dbReference type="SAM" id="MobiDB-lite"/>
    </source>
</evidence>
<evidence type="ECO:0000305" key="6"/>
<protein>
    <recommendedName>
        <fullName>Cyclin-dependent kinase inhibitor 1B</fullName>
    </recommendedName>
    <alternativeName>
        <fullName>Cyclin-dependent kinase inhibitor p27</fullName>
    </alternativeName>
    <alternativeName>
        <fullName>p27Kip1</fullName>
    </alternativeName>
</protein>
<feature type="chain" id="PRO_0000190082" description="Cyclin-dependent kinase inhibitor 1B">
    <location>
        <begin position="1"/>
        <end position="198"/>
    </location>
</feature>
<feature type="region of interest" description="Disordered" evidence="5">
    <location>
        <begin position="1"/>
        <end position="34"/>
    </location>
</feature>
<feature type="region of interest" description="Interaction with CDK2" evidence="3">
    <location>
        <begin position="51"/>
        <end position="91"/>
    </location>
</feature>
<feature type="region of interest" description="Disordered" evidence="5">
    <location>
        <begin position="85"/>
        <end position="198"/>
    </location>
</feature>
<feature type="short sequence motif" description="Nuclear localization signal" evidence="4">
    <location>
        <begin position="153"/>
        <end position="169"/>
    </location>
</feature>
<feature type="compositionally biased region" description="Polar residues" evidence="5">
    <location>
        <begin position="1"/>
        <end position="11"/>
    </location>
</feature>
<feature type="compositionally biased region" description="Basic and acidic residues" evidence="5">
    <location>
        <begin position="14"/>
        <end position="25"/>
    </location>
</feature>
<feature type="compositionally biased region" description="Polar residues" evidence="5">
    <location>
        <begin position="104"/>
        <end position="124"/>
    </location>
</feature>
<feature type="compositionally biased region" description="Polar residues" evidence="5">
    <location>
        <begin position="175"/>
        <end position="186"/>
    </location>
</feature>
<feature type="modified residue" description="Phosphoserine; by UHMK1" evidence="3">
    <location>
        <position position="10"/>
    </location>
</feature>
<feature type="modified residue" description="Phosphotyrosine; by SRC" evidence="3">
    <location>
        <position position="74"/>
    </location>
</feature>
<feature type="modified residue" description="Phosphotyrosine; by ABL, LYN and SRC" evidence="3">
    <location>
        <position position="88"/>
    </location>
</feature>
<feature type="modified residue" description="Phosphotyrosine" evidence="3">
    <location>
        <position position="89"/>
    </location>
</feature>
<feature type="modified residue" description="Phosphothreonine" evidence="2">
    <location>
        <position position="170"/>
    </location>
</feature>
<feature type="modified residue" description="Phosphothreonine; by PKB/AKT1, CDK1 and CDK2" evidence="3">
    <location>
        <position position="187"/>
    </location>
</feature>
<feature type="modified residue" description="Phosphothreonine; by CaMK1, PKB/AKT1, RPS6KA1, RPS6KA3 and PIM1" evidence="3">
    <location>
        <position position="198"/>
    </location>
</feature>
<keyword id="KW-0131">Cell cycle</keyword>
<keyword id="KW-0963">Cytoplasm</keyword>
<keyword id="KW-0967">Endosome</keyword>
<keyword id="KW-0539">Nucleus</keyword>
<keyword id="KW-0597">Phosphoprotein</keyword>
<keyword id="KW-0649">Protein kinase inhibitor</keyword>
<keyword id="KW-0832">Ubl conjugation</keyword>